<feature type="chain" id="PRO_1000025587" description="Phosphoenolpyruvate carboxylase">
    <location>
        <begin position="1"/>
        <end position="878"/>
    </location>
</feature>
<feature type="active site" evidence="1">
    <location>
        <position position="138"/>
    </location>
</feature>
<feature type="active site" evidence="1">
    <location>
        <position position="545"/>
    </location>
</feature>
<evidence type="ECO:0000255" key="1">
    <source>
        <dbReference type="HAMAP-Rule" id="MF_00595"/>
    </source>
</evidence>
<organism>
    <name type="scientific">Shewanella loihica (strain ATCC BAA-1088 / PV-4)</name>
    <dbReference type="NCBI Taxonomy" id="323850"/>
    <lineage>
        <taxon>Bacteria</taxon>
        <taxon>Pseudomonadati</taxon>
        <taxon>Pseudomonadota</taxon>
        <taxon>Gammaproteobacteria</taxon>
        <taxon>Alteromonadales</taxon>
        <taxon>Shewanellaceae</taxon>
        <taxon>Shewanella</taxon>
    </lineage>
</organism>
<comment type="function">
    <text evidence="1">Forms oxaloacetate, a four-carbon dicarboxylic acid source for the tricarboxylic acid cycle.</text>
</comment>
<comment type="catalytic activity">
    <reaction evidence="1">
        <text>oxaloacetate + phosphate = phosphoenolpyruvate + hydrogencarbonate</text>
        <dbReference type="Rhea" id="RHEA:28370"/>
        <dbReference type="ChEBI" id="CHEBI:16452"/>
        <dbReference type="ChEBI" id="CHEBI:17544"/>
        <dbReference type="ChEBI" id="CHEBI:43474"/>
        <dbReference type="ChEBI" id="CHEBI:58702"/>
        <dbReference type="EC" id="4.1.1.31"/>
    </reaction>
</comment>
<comment type="cofactor">
    <cofactor evidence="1">
        <name>Mg(2+)</name>
        <dbReference type="ChEBI" id="CHEBI:18420"/>
    </cofactor>
</comment>
<comment type="similarity">
    <text evidence="1">Belongs to the PEPCase type 1 family.</text>
</comment>
<reference key="1">
    <citation type="submission" date="2007-03" db="EMBL/GenBank/DDBJ databases">
        <title>Complete sequence of Shewanella loihica PV-4.</title>
        <authorList>
            <consortium name="US DOE Joint Genome Institute"/>
            <person name="Copeland A."/>
            <person name="Lucas S."/>
            <person name="Lapidus A."/>
            <person name="Barry K."/>
            <person name="Detter J.C."/>
            <person name="Glavina del Rio T."/>
            <person name="Hammon N."/>
            <person name="Israni S."/>
            <person name="Dalin E."/>
            <person name="Tice H."/>
            <person name="Pitluck S."/>
            <person name="Chain P."/>
            <person name="Malfatti S."/>
            <person name="Shin M."/>
            <person name="Vergez L."/>
            <person name="Schmutz J."/>
            <person name="Larimer F."/>
            <person name="Land M."/>
            <person name="Hauser L."/>
            <person name="Kyrpides N."/>
            <person name="Mikhailova N."/>
            <person name="Romine M.F."/>
            <person name="Serres G."/>
            <person name="Fredrickson J."/>
            <person name="Tiedje J."/>
            <person name="Richardson P."/>
        </authorList>
    </citation>
    <scope>NUCLEOTIDE SEQUENCE [LARGE SCALE GENOMIC DNA]</scope>
    <source>
        <strain>ATCC BAA-1088 / PV-4</strain>
    </source>
</reference>
<keyword id="KW-0120">Carbon dioxide fixation</keyword>
<keyword id="KW-0456">Lyase</keyword>
<keyword id="KW-0460">Magnesium</keyword>
<keyword id="KW-1185">Reference proteome</keyword>
<accession>A3Q9C4</accession>
<protein>
    <recommendedName>
        <fullName evidence="1">Phosphoenolpyruvate carboxylase</fullName>
        <shortName evidence="1">PEPC</shortName>
        <shortName evidence="1">PEPCase</shortName>
        <ecNumber evidence="1">4.1.1.31</ecNumber>
    </recommendedName>
</protein>
<gene>
    <name evidence="1" type="primary">ppc</name>
    <name type="ordered locus">Shew_0200</name>
</gene>
<proteinExistence type="inferred from homology"/>
<sequence>MTDMYASLRSNVGTLGQILGDTIRTHMDEPFLDKIEQIRHLAKSSRQGNDTAREQMLTLLAALPDEELVPFAKAFNQFLNLANIAEQFHTISRNCDELVCVPDPVDQLLGRMLNGRIDQDKMLECLQTLDIDLVLTAHPTEISRRTLIQKYSAVVDCLATMENPQLTEREKKQNHLRLRQLIAQIWHTNEIRHERPTPVDEARWGLSTIEASLWQAIPDFLRQLNEQVEERTGKQLPSDIAPIRFSSWMGGDRDGNPFVTAKVTQEVLDRNRHTAARLYLKDVVLLVNELSMEEANEELLALTDNSHEPYRVVLRELRQKLRDTIDYLNARLEGHSPEVDLDSLIWHEDDLKQPLTLLYRSLTESGMSLIANGLLLDMLRRLACFGIHMLRLDIRQDAQRHSDVIAELTRYLGLGDFDHWDEHEKQAFLLRELSGKRPLIPHNWEPSAEVAEVISTVRLIASQSPKALGSYVISMASQPSDVLTVLLLLKEAGCQHPMRVVPLFETLEDLNNAASCISALFAIDWYRGYCKGSQEVMIGYSDSAKDAGVMAAAWAQYSAQEKLVKVCNQADIKLTLFHGRGGTIGRGGGPAHKAILSQPPGSVDGRIRVTEQGEMIRFKFGLPKLAVQSLALYTSAVMEATLLPPPEPKPEWREAMERLASDSVTAYRAIVREEPDFVAYFRAATPEVELGKLPLGSRPAKRRVDGGIESLRAIPWIFAWSQNRLMLPAWLGAGEALQQAADRGELTLLREMEQQWPFFETRISMLEMVYAKAEPNLAKYYETCLVPQELHHLGEALRSRMATGIKVVLELTQSDALMSHTPWNRESVELRNPYIDPLNFLQAELLARTRKEQAGSSNVELALMLTIAGVAAGMRNTG</sequence>
<name>CAPP_SHELP</name>
<dbReference type="EC" id="4.1.1.31" evidence="1"/>
<dbReference type="EMBL" id="CP000606">
    <property type="protein sequence ID" value="ABO22072.1"/>
    <property type="molecule type" value="Genomic_DNA"/>
</dbReference>
<dbReference type="RefSeq" id="WP_011864007.1">
    <property type="nucleotide sequence ID" value="NC_009092.1"/>
</dbReference>
<dbReference type="SMR" id="A3Q9C4"/>
<dbReference type="STRING" id="323850.Shew_0200"/>
<dbReference type="KEGG" id="slo:Shew_0200"/>
<dbReference type="eggNOG" id="COG2352">
    <property type="taxonomic scope" value="Bacteria"/>
</dbReference>
<dbReference type="HOGENOM" id="CLU_006557_2_0_6"/>
<dbReference type="OrthoDB" id="9768133at2"/>
<dbReference type="Proteomes" id="UP000001558">
    <property type="component" value="Chromosome"/>
</dbReference>
<dbReference type="GO" id="GO:0005829">
    <property type="term" value="C:cytosol"/>
    <property type="evidence" value="ECO:0007669"/>
    <property type="project" value="TreeGrafter"/>
</dbReference>
<dbReference type="GO" id="GO:0000287">
    <property type="term" value="F:magnesium ion binding"/>
    <property type="evidence" value="ECO:0007669"/>
    <property type="project" value="UniProtKB-UniRule"/>
</dbReference>
<dbReference type="GO" id="GO:0008964">
    <property type="term" value="F:phosphoenolpyruvate carboxylase activity"/>
    <property type="evidence" value="ECO:0007669"/>
    <property type="project" value="UniProtKB-UniRule"/>
</dbReference>
<dbReference type="GO" id="GO:0015977">
    <property type="term" value="P:carbon fixation"/>
    <property type="evidence" value="ECO:0007669"/>
    <property type="project" value="UniProtKB-UniRule"/>
</dbReference>
<dbReference type="GO" id="GO:0006107">
    <property type="term" value="P:oxaloacetate metabolic process"/>
    <property type="evidence" value="ECO:0007669"/>
    <property type="project" value="UniProtKB-UniRule"/>
</dbReference>
<dbReference type="GO" id="GO:0006099">
    <property type="term" value="P:tricarboxylic acid cycle"/>
    <property type="evidence" value="ECO:0007669"/>
    <property type="project" value="InterPro"/>
</dbReference>
<dbReference type="Gene3D" id="1.20.1440.90">
    <property type="entry name" value="Phosphoenolpyruvate/pyruvate domain"/>
    <property type="match status" value="1"/>
</dbReference>
<dbReference type="HAMAP" id="MF_00595">
    <property type="entry name" value="PEPcase_type1"/>
    <property type="match status" value="1"/>
</dbReference>
<dbReference type="InterPro" id="IPR021135">
    <property type="entry name" value="PEP_COase"/>
</dbReference>
<dbReference type="InterPro" id="IPR022805">
    <property type="entry name" value="PEP_COase_bac/pln-type"/>
</dbReference>
<dbReference type="InterPro" id="IPR018129">
    <property type="entry name" value="PEP_COase_Lys_AS"/>
</dbReference>
<dbReference type="InterPro" id="IPR033129">
    <property type="entry name" value="PEPCASE_His_AS"/>
</dbReference>
<dbReference type="InterPro" id="IPR015813">
    <property type="entry name" value="Pyrv/PenolPyrv_kinase-like_dom"/>
</dbReference>
<dbReference type="NCBIfam" id="NF000584">
    <property type="entry name" value="PRK00009.1"/>
    <property type="match status" value="1"/>
</dbReference>
<dbReference type="PANTHER" id="PTHR30523">
    <property type="entry name" value="PHOSPHOENOLPYRUVATE CARBOXYLASE"/>
    <property type="match status" value="1"/>
</dbReference>
<dbReference type="PANTHER" id="PTHR30523:SF6">
    <property type="entry name" value="PHOSPHOENOLPYRUVATE CARBOXYLASE"/>
    <property type="match status" value="1"/>
</dbReference>
<dbReference type="Pfam" id="PF00311">
    <property type="entry name" value="PEPcase"/>
    <property type="match status" value="1"/>
</dbReference>
<dbReference type="PRINTS" id="PR00150">
    <property type="entry name" value="PEPCARBXLASE"/>
</dbReference>
<dbReference type="SUPFAM" id="SSF51621">
    <property type="entry name" value="Phosphoenolpyruvate/pyruvate domain"/>
    <property type="match status" value="1"/>
</dbReference>
<dbReference type="PROSITE" id="PS00781">
    <property type="entry name" value="PEPCASE_1"/>
    <property type="match status" value="1"/>
</dbReference>
<dbReference type="PROSITE" id="PS00393">
    <property type="entry name" value="PEPCASE_2"/>
    <property type="match status" value="1"/>
</dbReference>